<organism>
    <name type="scientific">Bacteroides thetaiotaomicron (strain ATCC 29148 / DSM 2079 / JCM 5827 / CCUG 10774 / NCTC 10582 / VPI-5482 / E50)</name>
    <dbReference type="NCBI Taxonomy" id="226186"/>
    <lineage>
        <taxon>Bacteria</taxon>
        <taxon>Pseudomonadati</taxon>
        <taxon>Bacteroidota</taxon>
        <taxon>Bacteroidia</taxon>
        <taxon>Bacteroidales</taxon>
        <taxon>Bacteroidaceae</taxon>
        <taxon>Bacteroides</taxon>
    </lineage>
</organism>
<protein>
    <recommendedName>
        <fullName evidence="1">UPF0301 protein BT_1078</fullName>
    </recommendedName>
</protein>
<feature type="chain" id="PRO_0000258798" description="UPF0301 protein BT_1078">
    <location>
        <begin position="1"/>
        <end position="196"/>
    </location>
</feature>
<comment type="similarity">
    <text evidence="1">Belongs to the UPF0301 (AlgH) family.</text>
</comment>
<accession>Q8A8T9</accession>
<sequence>MNIDSDIFKIQSNNVLPSRGKILISEPFLRDATFGRSVVLLIDHTEEGSMGLIINKQLPIFVNDIIKEFKYIENIPLYKGGPIATDTLFYLHTLADIPGAIPISKGLYLNGDFDEIKKYILQGNKVDRYIRFFLGYSGWESEQLSTELKENTWLVSKEENAYLMNGDTKDMWKQALEKLGSKYETWSRFPQVPTFN</sequence>
<name>Y1078_BACTN</name>
<proteinExistence type="inferred from homology"/>
<reference key="1">
    <citation type="journal article" date="2003" name="Science">
        <title>A genomic view of the human-Bacteroides thetaiotaomicron symbiosis.</title>
        <authorList>
            <person name="Xu J."/>
            <person name="Bjursell M.K."/>
            <person name="Himrod J."/>
            <person name="Deng S."/>
            <person name="Carmichael L.K."/>
            <person name="Chiang H.C."/>
            <person name="Hooper L.V."/>
            <person name="Gordon J.I."/>
        </authorList>
    </citation>
    <scope>NUCLEOTIDE SEQUENCE [LARGE SCALE GENOMIC DNA]</scope>
    <source>
        <strain>ATCC 29148 / DSM 2079 / JCM 5827 / CCUG 10774 / NCTC 10582 / VPI-5482 / E50</strain>
    </source>
</reference>
<evidence type="ECO:0000255" key="1">
    <source>
        <dbReference type="HAMAP-Rule" id="MF_00758"/>
    </source>
</evidence>
<keyword id="KW-1185">Reference proteome</keyword>
<dbReference type="EMBL" id="AE015928">
    <property type="protein sequence ID" value="AAO76185.1"/>
    <property type="molecule type" value="Genomic_DNA"/>
</dbReference>
<dbReference type="RefSeq" id="NP_809991.1">
    <property type="nucleotide sequence ID" value="NC_004663.1"/>
</dbReference>
<dbReference type="RefSeq" id="WP_008763511.1">
    <property type="nucleotide sequence ID" value="NZ_UYXG01000007.1"/>
</dbReference>
<dbReference type="SMR" id="Q8A8T9"/>
<dbReference type="FunCoup" id="Q8A8T9">
    <property type="interactions" value="229"/>
</dbReference>
<dbReference type="STRING" id="226186.BT_1078"/>
<dbReference type="PaxDb" id="226186-BT_1078"/>
<dbReference type="EnsemblBacteria" id="AAO76185">
    <property type="protein sequence ID" value="AAO76185"/>
    <property type="gene ID" value="BT_1078"/>
</dbReference>
<dbReference type="KEGG" id="bth:BT_1078"/>
<dbReference type="PATRIC" id="fig|226186.12.peg.1095"/>
<dbReference type="eggNOG" id="COG1678">
    <property type="taxonomic scope" value="Bacteria"/>
</dbReference>
<dbReference type="HOGENOM" id="CLU_057596_2_1_10"/>
<dbReference type="InParanoid" id="Q8A8T9"/>
<dbReference type="OrthoDB" id="9807486at2"/>
<dbReference type="Proteomes" id="UP000001414">
    <property type="component" value="Chromosome"/>
</dbReference>
<dbReference type="GO" id="GO:0005829">
    <property type="term" value="C:cytosol"/>
    <property type="evidence" value="ECO:0000318"/>
    <property type="project" value="GO_Central"/>
</dbReference>
<dbReference type="Gene3D" id="3.40.1740.10">
    <property type="entry name" value="VC0467-like"/>
    <property type="match status" value="1"/>
</dbReference>
<dbReference type="HAMAP" id="MF_00758">
    <property type="entry name" value="UPF0301"/>
    <property type="match status" value="1"/>
</dbReference>
<dbReference type="InterPro" id="IPR003774">
    <property type="entry name" value="AlgH-like"/>
</dbReference>
<dbReference type="PANTHER" id="PTHR30327">
    <property type="entry name" value="UNCHARACTERIZED PROTEIN YQGE"/>
    <property type="match status" value="1"/>
</dbReference>
<dbReference type="PANTHER" id="PTHR30327:SF1">
    <property type="entry name" value="UPF0301 PROTEIN YQGE"/>
    <property type="match status" value="1"/>
</dbReference>
<dbReference type="Pfam" id="PF02622">
    <property type="entry name" value="DUF179"/>
    <property type="match status" value="1"/>
</dbReference>
<dbReference type="SUPFAM" id="SSF143456">
    <property type="entry name" value="VC0467-like"/>
    <property type="match status" value="1"/>
</dbReference>
<gene>
    <name type="ordered locus">BT_1078</name>
</gene>